<evidence type="ECO:0000255" key="1"/>
<evidence type="ECO:0000303" key="2">
    <source>
    </source>
</evidence>
<evidence type="ECO:0000305" key="3"/>
<evidence type="ECO:0000312" key="4">
    <source>
        <dbReference type="HGNC" id="HGNC:1843"/>
    </source>
</evidence>
<protein>
    <recommendedName>
        <fullName evidence="4">Haloacid dehalogenase-like hydrolase domain-containing 5</fullName>
    </recommendedName>
    <alternativeName>
        <fullName evidence="3">Cat eye syndrome critical region protein 5</fullName>
    </alternativeName>
</protein>
<feature type="signal peptide" evidence="1">
    <location>
        <begin position="1"/>
        <end position="23"/>
    </location>
</feature>
<feature type="chain" id="PRO_0000020920" description="Haloacid dehalogenase-like hydrolase domain-containing 5">
    <location>
        <begin position="24"/>
        <end position="423"/>
    </location>
</feature>
<feature type="splice variant" id="VSP_003840" description="In isoform 1." evidence="2">
    <original>MAAWGCVAALGAARGLCWRAARAAAGLQGRPARRCYAVGPA</original>
    <variation>MYAWFFLPSFS</variation>
    <location>
        <begin position="1"/>
        <end position="41"/>
    </location>
</feature>
<feature type="sequence variant" id="VAR_050790" description="In dbSNP:rs35665085.">
    <original>T</original>
    <variation>M</variation>
    <location>
        <position position="179"/>
    </location>
</feature>
<feature type="sequence variant" id="VAR_033674" description="In dbSNP:rs16982020.">
    <original>R</original>
    <variation>S</variation>
    <location>
        <position position="369"/>
    </location>
</feature>
<feature type="sequence variant" id="VAR_050791" description="In dbSNP:rs35327402.">
    <original>R</original>
    <variation>C</variation>
    <location>
        <position position="416"/>
    </location>
</feature>
<feature type="sequence conflict" description="In Ref. 2; BAA91180." evidence="3" ref="2">
    <original>D</original>
    <variation>N</variation>
    <location>
        <position position="54"/>
    </location>
</feature>
<feature type="sequence conflict" description="In Ref. 2; BAA91475." evidence="3" ref="2">
    <original>V</original>
    <variation>F</variation>
    <location>
        <position position="86"/>
    </location>
</feature>
<feature type="sequence conflict" description="In Ref. 2; BAA91475." evidence="3" ref="2">
    <original>E</original>
    <variation>G</variation>
    <location>
        <position position="297"/>
    </location>
</feature>
<organism>
    <name type="scientific">Homo sapiens</name>
    <name type="common">Human</name>
    <dbReference type="NCBI Taxonomy" id="9606"/>
    <lineage>
        <taxon>Eukaryota</taxon>
        <taxon>Metazoa</taxon>
        <taxon>Chordata</taxon>
        <taxon>Craniata</taxon>
        <taxon>Vertebrata</taxon>
        <taxon>Euteleostomi</taxon>
        <taxon>Mammalia</taxon>
        <taxon>Eutheria</taxon>
        <taxon>Euarchontoglires</taxon>
        <taxon>Primates</taxon>
        <taxon>Haplorrhini</taxon>
        <taxon>Catarrhini</taxon>
        <taxon>Hominidae</taxon>
        <taxon>Homo</taxon>
    </lineage>
</organism>
<keyword id="KW-0025">Alternative splicing</keyword>
<keyword id="KW-1267">Proteomics identification</keyword>
<keyword id="KW-1185">Reference proteome</keyword>
<keyword id="KW-0732">Signal</keyword>
<proteinExistence type="evidence at protein level"/>
<reference key="1">
    <citation type="journal article" date="2001" name="Genome Res.">
        <title>Analysis of the cat eye syndrome critical region in humans and the region of conserved synteny in mice: a search for candidate genes at or near the human chromosome 22 pericentromere.</title>
        <authorList>
            <person name="Footz T.K."/>
            <person name="Brinkman-Mills P."/>
            <person name="Banting G.S."/>
            <person name="Maier S.A."/>
            <person name="Riazi M.A."/>
            <person name="Bridgland L.J."/>
            <person name="Hu S."/>
            <person name="Birren B."/>
            <person name="Minoshima S."/>
            <person name="Shimizu N."/>
            <person name="Pan H."/>
            <person name="Nguyen T."/>
            <person name="Fang F."/>
            <person name="Fu Y."/>
            <person name="Ray L."/>
            <person name="Wu H."/>
            <person name="Shaull S."/>
            <person name="Phan S."/>
            <person name="Yao Z."/>
            <person name="Chen F."/>
            <person name="Huan A."/>
            <person name="Hu P."/>
            <person name="Wang Q."/>
            <person name="Loh P."/>
            <person name="Qi S."/>
            <person name="Roe B.A."/>
            <person name="McDermid H.E."/>
        </authorList>
    </citation>
    <scope>NUCLEOTIDE SEQUENCE [MRNA] (ISOFORMS 1 AND 2)</scope>
</reference>
<reference key="2">
    <citation type="journal article" date="2004" name="Nat. Genet.">
        <title>Complete sequencing and characterization of 21,243 full-length human cDNAs.</title>
        <authorList>
            <person name="Ota T."/>
            <person name="Suzuki Y."/>
            <person name="Nishikawa T."/>
            <person name="Otsuki T."/>
            <person name="Sugiyama T."/>
            <person name="Irie R."/>
            <person name="Wakamatsu A."/>
            <person name="Hayashi K."/>
            <person name="Sato H."/>
            <person name="Nagai K."/>
            <person name="Kimura K."/>
            <person name="Makita H."/>
            <person name="Sekine M."/>
            <person name="Obayashi M."/>
            <person name="Nishi T."/>
            <person name="Shibahara T."/>
            <person name="Tanaka T."/>
            <person name="Ishii S."/>
            <person name="Yamamoto J."/>
            <person name="Saito K."/>
            <person name="Kawai Y."/>
            <person name="Isono Y."/>
            <person name="Nakamura Y."/>
            <person name="Nagahari K."/>
            <person name="Murakami K."/>
            <person name="Yasuda T."/>
            <person name="Iwayanagi T."/>
            <person name="Wagatsuma M."/>
            <person name="Shiratori A."/>
            <person name="Sudo H."/>
            <person name="Hosoiri T."/>
            <person name="Kaku Y."/>
            <person name="Kodaira H."/>
            <person name="Kondo H."/>
            <person name="Sugawara M."/>
            <person name="Takahashi M."/>
            <person name="Kanda K."/>
            <person name="Yokoi T."/>
            <person name="Furuya T."/>
            <person name="Kikkawa E."/>
            <person name="Omura Y."/>
            <person name="Abe K."/>
            <person name="Kamihara K."/>
            <person name="Katsuta N."/>
            <person name="Sato K."/>
            <person name="Tanikawa M."/>
            <person name="Yamazaki M."/>
            <person name="Ninomiya K."/>
            <person name="Ishibashi T."/>
            <person name="Yamashita H."/>
            <person name="Murakawa K."/>
            <person name="Fujimori K."/>
            <person name="Tanai H."/>
            <person name="Kimata M."/>
            <person name="Watanabe M."/>
            <person name="Hiraoka S."/>
            <person name="Chiba Y."/>
            <person name="Ishida S."/>
            <person name="Ono Y."/>
            <person name="Takiguchi S."/>
            <person name="Watanabe S."/>
            <person name="Yosida M."/>
            <person name="Hotuta T."/>
            <person name="Kusano J."/>
            <person name="Kanehori K."/>
            <person name="Takahashi-Fujii A."/>
            <person name="Hara H."/>
            <person name="Tanase T.-O."/>
            <person name="Nomura Y."/>
            <person name="Togiya S."/>
            <person name="Komai F."/>
            <person name="Hara R."/>
            <person name="Takeuchi K."/>
            <person name="Arita M."/>
            <person name="Imose N."/>
            <person name="Musashino K."/>
            <person name="Yuuki H."/>
            <person name="Oshima A."/>
            <person name="Sasaki N."/>
            <person name="Aotsuka S."/>
            <person name="Yoshikawa Y."/>
            <person name="Matsunawa H."/>
            <person name="Ichihara T."/>
            <person name="Shiohata N."/>
            <person name="Sano S."/>
            <person name="Moriya S."/>
            <person name="Momiyama H."/>
            <person name="Satoh N."/>
            <person name="Takami S."/>
            <person name="Terashima Y."/>
            <person name="Suzuki O."/>
            <person name="Nakagawa S."/>
            <person name="Senoh A."/>
            <person name="Mizoguchi H."/>
            <person name="Goto Y."/>
            <person name="Shimizu F."/>
            <person name="Wakebe H."/>
            <person name="Hishigaki H."/>
            <person name="Watanabe T."/>
            <person name="Sugiyama A."/>
            <person name="Takemoto M."/>
            <person name="Kawakami B."/>
            <person name="Yamazaki M."/>
            <person name="Watanabe K."/>
            <person name="Kumagai A."/>
            <person name="Itakura S."/>
            <person name="Fukuzumi Y."/>
            <person name="Fujimori Y."/>
            <person name="Komiyama M."/>
            <person name="Tashiro H."/>
            <person name="Tanigami A."/>
            <person name="Fujiwara T."/>
            <person name="Ono T."/>
            <person name="Yamada K."/>
            <person name="Fujii Y."/>
            <person name="Ozaki K."/>
            <person name="Hirao M."/>
            <person name="Ohmori Y."/>
            <person name="Kawabata A."/>
            <person name="Hikiji T."/>
            <person name="Kobatake N."/>
            <person name="Inagaki H."/>
            <person name="Ikema Y."/>
            <person name="Okamoto S."/>
            <person name="Okitani R."/>
            <person name="Kawakami T."/>
            <person name="Noguchi S."/>
            <person name="Itoh T."/>
            <person name="Shigeta K."/>
            <person name="Senba T."/>
            <person name="Matsumura K."/>
            <person name="Nakajima Y."/>
            <person name="Mizuno T."/>
            <person name="Morinaga M."/>
            <person name="Sasaki M."/>
            <person name="Togashi T."/>
            <person name="Oyama M."/>
            <person name="Hata H."/>
            <person name="Watanabe M."/>
            <person name="Komatsu T."/>
            <person name="Mizushima-Sugano J."/>
            <person name="Satoh T."/>
            <person name="Shirai Y."/>
            <person name="Takahashi Y."/>
            <person name="Nakagawa K."/>
            <person name="Okumura K."/>
            <person name="Nagase T."/>
            <person name="Nomura N."/>
            <person name="Kikuchi H."/>
            <person name="Masuho Y."/>
            <person name="Yamashita R."/>
            <person name="Nakai K."/>
            <person name="Yada T."/>
            <person name="Nakamura Y."/>
            <person name="Ohara O."/>
            <person name="Isogai T."/>
            <person name="Sugano S."/>
        </authorList>
    </citation>
    <scope>NUCLEOTIDE SEQUENCE [LARGE SCALE MRNA] (ISOFORM 2)</scope>
    <source>
        <tissue>Embryo</tissue>
        <tissue>Gastric carcinoma</tissue>
        <tissue>Testis</tissue>
    </source>
</reference>
<reference key="3">
    <citation type="submission" date="2005-07" db="EMBL/GenBank/DDBJ databases">
        <authorList>
            <person name="Mural R.J."/>
            <person name="Istrail S."/>
            <person name="Sutton G.G."/>
            <person name="Florea L."/>
            <person name="Halpern A.L."/>
            <person name="Mobarry C.M."/>
            <person name="Lippert R."/>
            <person name="Walenz B."/>
            <person name="Shatkay H."/>
            <person name="Dew I."/>
            <person name="Miller J.R."/>
            <person name="Flanigan M.J."/>
            <person name="Edwards N.J."/>
            <person name="Bolanos R."/>
            <person name="Fasulo D."/>
            <person name="Halldorsson B.V."/>
            <person name="Hannenhalli S."/>
            <person name="Turner R."/>
            <person name="Yooseph S."/>
            <person name="Lu F."/>
            <person name="Nusskern D.R."/>
            <person name="Shue B.C."/>
            <person name="Zheng X.H."/>
            <person name="Zhong F."/>
            <person name="Delcher A.L."/>
            <person name="Huson D.H."/>
            <person name="Kravitz S.A."/>
            <person name="Mouchard L."/>
            <person name="Reinert K."/>
            <person name="Remington K.A."/>
            <person name="Clark A.G."/>
            <person name="Waterman M.S."/>
            <person name="Eichler E.E."/>
            <person name="Adams M.D."/>
            <person name="Hunkapiller M.W."/>
            <person name="Myers E.W."/>
            <person name="Venter J.C."/>
        </authorList>
    </citation>
    <scope>NUCLEOTIDE SEQUENCE [LARGE SCALE GENOMIC DNA]</scope>
</reference>
<reference key="4">
    <citation type="journal article" date="2004" name="Genome Res.">
        <title>The status, quality, and expansion of the NIH full-length cDNA project: the Mammalian Gene Collection (MGC).</title>
        <authorList>
            <consortium name="The MGC Project Team"/>
        </authorList>
    </citation>
    <scope>NUCLEOTIDE SEQUENCE [LARGE SCALE MRNA] (ISOFORM 2)</scope>
    <source>
        <tissue>Lymph</tissue>
    </source>
</reference>
<reference key="5">
    <citation type="journal article" date="2011" name="BMC Syst. Biol.">
        <title>Initial characterization of the human central proteome.</title>
        <authorList>
            <person name="Burkard T.R."/>
            <person name="Planyavsky M."/>
            <person name="Kaupe I."/>
            <person name="Breitwieser F.P."/>
            <person name="Buerckstuemmer T."/>
            <person name="Bennett K.L."/>
            <person name="Superti-Furga G."/>
            <person name="Colinge J."/>
        </authorList>
    </citation>
    <scope>IDENTIFICATION BY MASS SPECTROMETRY [LARGE SCALE ANALYSIS]</scope>
</reference>
<reference key="6">
    <citation type="journal article" date="2015" name="Proteomics">
        <title>N-terminome analysis of the human mitochondrial proteome.</title>
        <authorList>
            <person name="Vaca Jacome A.S."/>
            <person name="Rabilloud T."/>
            <person name="Schaeffer-Reiss C."/>
            <person name="Rompais M."/>
            <person name="Ayoub D."/>
            <person name="Lane L."/>
            <person name="Bairoch A."/>
            <person name="Van Dorsselaer A."/>
            <person name="Carapito C."/>
        </authorList>
    </citation>
    <scope>IDENTIFICATION BY MASS SPECTROMETRY [LARGE SCALE ANALYSIS]</scope>
</reference>
<name>HDHD5_HUMAN</name>
<accession>Q9BXW7</accession>
<accession>B2RCK5</accession>
<accession>Q9BXW8</accession>
<accession>Q9NWA8</accession>
<accession>Q9NX41</accession>
<gene>
    <name evidence="4" type="primary">HDHD5</name>
    <name evidence="4" type="synonym">CECR5</name>
</gene>
<dbReference type="EMBL" id="AF273271">
    <property type="protein sequence ID" value="AAK19152.1"/>
    <property type="molecule type" value="mRNA"/>
</dbReference>
<dbReference type="EMBL" id="AF273270">
    <property type="protein sequence ID" value="AAK19151.1"/>
    <property type="molecule type" value="mRNA"/>
</dbReference>
<dbReference type="EMBL" id="AK001034">
    <property type="protein sequence ID" value="BAA91475.1"/>
    <property type="molecule type" value="mRNA"/>
</dbReference>
<dbReference type="EMBL" id="AK000461">
    <property type="protein sequence ID" value="BAA91180.1"/>
    <property type="molecule type" value="mRNA"/>
</dbReference>
<dbReference type="EMBL" id="AK315156">
    <property type="protein sequence ID" value="BAG37602.1"/>
    <property type="molecule type" value="mRNA"/>
</dbReference>
<dbReference type="EMBL" id="CH471193">
    <property type="protein sequence ID" value="EAW57748.1"/>
    <property type="molecule type" value="Genomic_DNA"/>
</dbReference>
<dbReference type="EMBL" id="BC042540">
    <property type="protein sequence ID" value="AAH42540.1"/>
    <property type="molecule type" value="mRNA"/>
</dbReference>
<dbReference type="CCDS" id="CCDS13741.1">
    <molecule id="Q9BXW7-2"/>
</dbReference>
<dbReference type="CCDS" id="CCDS33595.1">
    <molecule id="Q9BXW7-1"/>
</dbReference>
<dbReference type="RefSeq" id="NP_060299.4">
    <molecule id="Q9BXW7-2"/>
    <property type="nucleotide sequence ID" value="NM_017829.5"/>
</dbReference>
<dbReference type="RefSeq" id="NP_149061.1">
    <molecule id="Q9BXW7-1"/>
    <property type="nucleotide sequence ID" value="NM_033070.3"/>
</dbReference>
<dbReference type="SMR" id="Q9BXW7"/>
<dbReference type="BioGRID" id="118173">
    <property type="interactions" value="91"/>
</dbReference>
<dbReference type="FunCoup" id="Q9BXW7">
    <property type="interactions" value="1024"/>
</dbReference>
<dbReference type="IntAct" id="Q9BXW7">
    <property type="interactions" value="43"/>
</dbReference>
<dbReference type="MINT" id="Q9BXW7"/>
<dbReference type="STRING" id="9606.ENSP00000337358"/>
<dbReference type="DEPOD" id="HDHD5"/>
<dbReference type="GlyGen" id="Q9BXW7">
    <property type="glycosylation" value="1 site, 1 O-linked glycan (1 site)"/>
</dbReference>
<dbReference type="iPTMnet" id="Q9BXW7"/>
<dbReference type="PhosphoSitePlus" id="Q9BXW7"/>
<dbReference type="SwissPalm" id="Q9BXW7"/>
<dbReference type="BioMuta" id="HDHD5"/>
<dbReference type="DMDM" id="20177842"/>
<dbReference type="jPOST" id="Q9BXW7"/>
<dbReference type="MassIVE" id="Q9BXW7"/>
<dbReference type="PaxDb" id="9606-ENSP00000337358"/>
<dbReference type="PeptideAtlas" id="Q9BXW7"/>
<dbReference type="ProteomicsDB" id="79529">
    <molecule id="Q9BXW7-1"/>
</dbReference>
<dbReference type="ProteomicsDB" id="79530">
    <molecule id="Q9BXW7-2"/>
</dbReference>
<dbReference type="Pumba" id="Q9BXW7"/>
<dbReference type="Antibodypedia" id="257">
    <property type="antibodies" value="120 antibodies from 20 providers"/>
</dbReference>
<dbReference type="DNASU" id="27440"/>
<dbReference type="Ensembl" id="ENST00000155674.9">
    <molecule id="Q9BXW7-2"/>
    <property type="protein sequence ID" value="ENSP00000155674.5"/>
    <property type="gene ID" value="ENSG00000069998.12"/>
</dbReference>
<dbReference type="Ensembl" id="ENST00000336737.8">
    <molecule id="Q9BXW7-1"/>
    <property type="protein sequence ID" value="ENSP00000337358.4"/>
    <property type="gene ID" value="ENSG00000069998.12"/>
</dbReference>
<dbReference type="GeneID" id="27440"/>
<dbReference type="KEGG" id="hsa:27440"/>
<dbReference type="MANE-Select" id="ENST00000336737.8">
    <property type="protein sequence ID" value="ENSP00000337358.4"/>
    <property type="RefSeq nucleotide sequence ID" value="NM_033070.3"/>
    <property type="RefSeq protein sequence ID" value="NP_149061.1"/>
</dbReference>
<dbReference type="UCSC" id="uc002zmf.4">
    <molecule id="Q9BXW7-1"/>
    <property type="organism name" value="human"/>
</dbReference>
<dbReference type="AGR" id="HGNC:1843"/>
<dbReference type="CTD" id="27440"/>
<dbReference type="DisGeNET" id="27440"/>
<dbReference type="GeneCards" id="HDHD5"/>
<dbReference type="HGNC" id="HGNC:1843">
    <property type="gene designation" value="HDHD5"/>
</dbReference>
<dbReference type="HPA" id="ENSG00000069998">
    <property type="expression patterns" value="Low tissue specificity"/>
</dbReference>
<dbReference type="neXtProt" id="NX_Q9BXW7"/>
<dbReference type="OpenTargets" id="ENSG00000069998"/>
<dbReference type="PharmGKB" id="PA26386"/>
<dbReference type="VEuPathDB" id="HostDB:ENSG00000069998"/>
<dbReference type="eggNOG" id="KOG1618">
    <property type="taxonomic scope" value="Eukaryota"/>
</dbReference>
<dbReference type="GeneTree" id="ENSGT00390000018051"/>
<dbReference type="HOGENOM" id="CLU_030880_0_1_1"/>
<dbReference type="InParanoid" id="Q9BXW7"/>
<dbReference type="OMA" id="HDKRMLV"/>
<dbReference type="OrthoDB" id="10251048at2759"/>
<dbReference type="PAN-GO" id="Q9BXW7">
    <property type="GO annotations" value="2 GO annotations based on evolutionary models"/>
</dbReference>
<dbReference type="PhylomeDB" id="Q9BXW7"/>
<dbReference type="TreeFam" id="TF313681"/>
<dbReference type="PathwayCommons" id="Q9BXW7"/>
<dbReference type="SignaLink" id="Q9BXW7"/>
<dbReference type="BioGRID-ORCS" id="27440">
    <property type="hits" value="12 hits in 1149 CRISPR screens"/>
</dbReference>
<dbReference type="ChiTaRS" id="HDHD5">
    <property type="organism name" value="human"/>
</dbReference>
<dbReference type="GenomeRNAi" id="27440"/>
<dbReference type="Pharos" id="Q9BXW7">
    <property type="development level" value="Tdark"/>
</dbReference>
<dbReference type="PRO" id="PR:Q9BXW7"/>
<dbReference type="Proteomes" id="UP000005640">
    <property type="component" value="Chromosome 22"/>
</dbReference>
<dbReference type="RNAct" id="Q9BXW7">
    <property type="molecule type" value="protein"/>
</dbReference>
<dbReference type="Bgee" id="ENSG00000069998">
    <property type="expression patterns" value="Expressed in apex of heart and 199 other cell types or tissues"/>
</dbReference>
<dbReference type="ExpressionAtlas" id="Q9BXW7">
    <property type="expression patterns" value="baseline and differential"/>
</dbReference>
<dbReference type="GO" id="GO:0005739">
    <property type="term" value="C:mitochondrion"/>
    <property type="evidence" value="ECO:0000314"/>
    <property type="project" value="HPA"/>
</dbReference>
<dbReference type="GO" id="GO:0046474">
    <property type="term" value="P:glycerophospholipid biosynthetic process"/>
    <property type="evidence" value="ECO:0000318"/>
    <property type="project" value="GO_Central"/>
</dbReference>
<dbReference type="CDD" id="cd07511">
    <property type="entry name" value="HAD_like"/>
    <property type="match status" value="1"/>
</dbReference>
<dbReference type="FunFam" id="3.40.50.1000:FF:000081">
    <property type="entry name" value="Haloacid dehalogenase like hydrolase domain containing 5"/>
    <property type="match status" value="1"/>
</dbReference>
<dbReference type="Gene3D" id="3.40.50.1000">
    <property type="entry name" value="HAD superfamily/HAD-like"/>
    <property type="match status" value="2"/>
</dbReference>
<dbReference type="InterPro" id="IPR050324">
    <property type="entry name" value="CDP-alcohol_PTase-I"/>
</dbReference>
<dbReference type="InterPro" id="IPR036412">
    <property type="entry name" value="HAD-like_sf"/>
</dbReference>
<dbReference type="InterPro" id="IPR006357">
    <property type="entry name" value="HAD-SF_hydro_IIA"/>
</dbReference>
<dbReference type="InterPro" id="IPR006353">
    <property type="entry name" value="HAD-SF_hydro_IIA_CECR5"/>
</dbReference>
<dbReference type="InterPro" id="IPR023214">
    <property type="entry name" value="HAD_sf"/>
</dbReference>
<dbReference type="NCBIfam" id="TIGR01456">
    <property type="entry name" value="CECR5"/>
    <property type="match status" value="1"/>
</dbReference>
<dbReference type="NCBIfam" id="TIGR01460">
    <property type="entry name" value="HAD-SF-IIA"/>
    <property type="match status" value="1"/>
</dbReference>
<dbReference type="PANTHER" id="PTHR14269">
    <property type="entry name" value="CDP-DIACYLGLYCEROL--GLYCEROL-3-PHOSPHATE 3-PHOSPHATIDYLTRANSFERASE-RELATED"/>
    <property type="match status" value="1"/>
</dbReference>
<dbReference type="PANTHER" id="PTHR14269:SF17">
    <property type="entry name" value="HALOACID DEHALOGENASE-LIKE HYDROLASE DOMAIN-CONTAINING 5"/>
    <property type="match status" value="1"/>
</dbReference>
<dbReference type="Pfam" id="PF13344">
    <property type="entry name" value="Hydrolase_6"/>
    <property type="match status" value="1"/>
</dbReference>
<dbReference type="SUPFAM" id="SSF56784">
    <property type="entry name" value="HAD-like"/>
    <property type="match status" value="1"/>
</dbReference>
<comment type="alternative products">
    <event type="alternative splicing"/>
    <isoform>
        <id>Q9BXW7-1</id>
        <name>2</name>
        <sequence type="displayed"/>
    </isoform>
    <isoform>
        <id>Q9BXW7-2</id>
        <name>1</name>
        <sequence type="described" ref="VSP_003840"/>
    </isoform>
</comment>
<comment type="tissue specificity">
    <text>Widely expressed.</text>
</comment>
<comment type="miscellaneous">
    <text>Candidate gene for the Cat Eye Syndrome (CES), a developmental disorder associated with the duplication of a 2 Mb region of 22q11.2. Duplication usually takes in the form of a surpernumerary bisatellited isodicentric chromosome, resulting in four copies of the region (represents an inv dup(22)(q11)). CES is characterized clinically by the combination of coloboma of the iris and anal atresia with fistula, downslanting palpebral fissures, preauricular tags and/or pits, frequent occurrence of heart and renal malformations, and normal or near-normal mental development.</text>
</comment>
<comment type="similarity">
    <text evidence="3">Belongs to the HAD-like hydrolase superfamily.</text>
</comment>
<sequence length="423" mass="46321">MAAWGCVAALGAARGLCWRAARAAAGLQGRPARRCYAVGPAQSPPTFGFLLDIDGVLVRGHRVIPAALKAFRRLVNSQGQLRVPVVFVTNAGNILQHSKAQELSALLGCEVDADQVILSHSPMKLFSEYHEKRMLVSGQGPVMENAQGLGFRNVVTVDELRMAFPLLDMVDLERRLKTTPLPRNDFPRIEGVLLLGEPVRWETSLQLIMDVLLSNGSPGAGLATPPYPHLPVLASNMDLLWMAEAKMPRFGHGTFLLCLETIYQKVTGKELRYEGLMGKPSILTYQYAEDLIRRQAERRGWAAPIRKLYAVGDNPMSDVYGANLFHQYLQKATHDGAPELGAGGTRQQQPSASQSCISILVCTGVYNPRNPQSTEPVLGGGEPPFHGHRDLCFSPGLMEASHVVNDVNEAVQLVFRKEGWALE</sequence>